<name>CR2AA_BACTX</name>
<comment type="function">
    <text evidence="1">Promotes colloidosmotic lysis by binding to the midgut epithelial cells of both dipteran (Aedes aegypti) and lepidopteran (Manduca sexta) larvae.</text>
</comment>
<comment type="miscellaneous">
    <text evidence="1">Toxic segment of the protein is located in the N-terminus.</text>
</comment>
<comment type="similarity">
    <text evidence="2">Belongs to the delta endotoxin family.</text>
</comment>
<dbReference type="EMBL" id="AF047038">
    <property type="protein sequence ID" value="AAC04867.1"/>
    <property type="molecule type" value="Genomic_DNA"/>
</dbReference>
<dbReference type="SMR" id="P0A378"/>
<dbReference type="GO" id="GO:0005102">
    <property type="term" value="F:signaling receptor binding"/>
    <property type="evidence" value="ECO:0007669"/>
    <property type="project" value="InterPro"/>
</dbReference>
<dbReference type="GO" id="GO:0090729">
    <property type="term" value="F:toxin activity"/>
    <property type="evidence" value="ECO:0007669"/>
    <property type="project" value="UniProtKB-KW"/>
</dbReference>
<dbReference type="GO" id="GO:0030435">
    <property type="term" value="P:sporulation resulting in formation of a cellular spore"/>
    <property type="evidence" value="ECO:0007669"/>
    <property type="project" value="UniProtKB-KW"/>
</dbReference>
<dbReference type="GO" id="GO:0001907">
    <property type="term" value="P:symbiont-mediated killing of host cell"/>
    <property type="evidence" value="ECO:0007669"/>
    <property type="project" value="InterPro"/>
</dbReference>
<dbReference type="Gene3D" id="2.60.120.260">
    <property type="entry name" value="Galactose-binding domain-like"/>
    <property type="match status" value="1"/>
</dbReference>
<dbReference type="Gene3D" id="2.100.10.10">
    <property type="entry name" value="Pesticidal crystal protein, central domain"/>
    <property type="match status" value="1"/>
</dbReference>
<dbReference type="Gene3D" id="1.20.190.10">
    <property type="entry name" value="Pesticidal crystal protein, N-terminal domain"/>
    <property type="match status" value="1"/>
</dbReference>
<dbReference type="InterPro" id="IPR008979">
    <property type="entry name" value="Galactose-bd-like_sf"/>
</dbReference>
<dbReference type="InterPro" id="IPR038979">
    <property type="entry name" value="Pest_crys"/>
</dbReference>
<dbReference type="InterPro" id="IPR005638">
    <property type="entry name" value="Pest_crys_dom-III"/>
</dbReference>
<dbReference type="InterPro" id="IPR005639">
    <property type="entry name" value="Pest_crys_dom_I"/>
</dbReference>
<dbReference type="InterPro" id="IPR036716">
    <property type="entry name" value="Pest_crys_N_sf"/>
</dbReference>
<dbReference type="InterPro" id="IPR015214">
    <property type="entry name" value="Pest_cryst_cen_dom_Cry2A/18"/>
</dbReference>
<dbReference type="InterPro" id="IPR036399">
    <property type="entry name" value="Pest_cryst_cen_dom_sf"/>
</dbReference>
<dbReference type="PANTHER" id="PTHR37003">
    <property type="entry name" value="ENDOTOXIN_N DOMAIN-CONTAINING PROTEIN-RELATED"/>
    <property type="match status" value="1"/>
</dbReference>
<dbReference type="PANTHER" id="PTHR37003:SF2">
    <property type="entry name" value="PESTICIDAL CRYSTAL PROTEIN N-TERMINAL DOMAIN-CONTAINING PROTEIN"/>
    <property type="match status" value="1"/>
</dbReference>
<dbReference type="Pfam" id="PF03944">
    <property type="entry name" value="Endotoxin_C"/>
    <property type="match status" value="1"/>
</dbReference>
<dbReference type="Pfam" id="PF09131">
    <property type="entry name" value="Endotoxin_mid"/>
    <property type="match status" value="1"/>
</dbReference>
<dbReference type="Pfam" id="PF03945">
    <property type="entry name" value="Endotoxin_N"/>
    <property type="match status" value="1"/>
</dbReference>
<dbReference type="SUPFAM" id="SSF51096">
    <property type="entry name" value="delta-Endotoxin (insectocide), middle domain"/>
    <property type="match status" value="1"/>
</dbReference>
<dbReference type="SUPFAM" id="SSF56849">
    <property type="entry name" value="delta-Endotoxin (insectocide), N-terminal domain"/>
    <property type="match status" value="1"/>
</dbReference>
<dbReference type="SUPFAM" id="SSF49785">
    <property type="entry name" value="Galactose-binding domain-like"/>
    <property type="match status" value="1"/>
</dbReference>
<sequence>MNSVLNSGRTTICDAYNVVAHDPFSFEHKSLDTIQKEWMEWKRTDHSLYVAPVVGTVSSFLLKKVGSLIGKRILSELWGIIFPSGSTNLMQDILRETEQFLNQRLNTDTLARVNAELIGLQANIREFNQQVDNFLNPTQNPVPLSITSSVNTMQQLFLNRLPQFQIQGYQLLLLPLFAQAANMHLSFIRDVILNADEWGISAATLRTYRDYLRNYTRDYSNYCINTYQTAFRGLNTRLHDMLEFRTYMFLNVFEYVSIWSLFKYQSLMVSSGANLYASGSGPQQTQSFTAQNWPFLYSLFQVNSNYILSGISGTRLSITFPNIGGLPGSTTTHSLNSARVNYSGGVSSGLIGATNLNHNFNCSTVLPPLSTPFVRSWLDSGTDREGVATSTNWQTESFQTTLSLRCGASSARGNSNYFPDYFIRNISGVPLVIRNEDLTRPLHYNQIRNIESPSGTPGGARAYLVSVHNRKNNIYAANENGTMIHLAPEDYTGFTISPIHATQVNNQTRTFISEKFGNQGDSLRFEQSNTTARYTLRGNGSSYNLYLRVSSIGNSTIRVTINGRVYTVSNVNTTTNNDGVNDNGARFPDINIGNIVASDNTNVTLDINVTLNSGTPFDLMNIMFVPTNLPPLY</sequence>
<evidence type="ECO:0000250" key="1"/>
<evidence type="ECO:0000305" key="2"/>
<feature type="chain" id="PRO_0000174056" description="Pesticidal crystal protein Cry2Aa">
    <location>
        <begin position="1"/>
        <end position="633"/>
    </location>
</feature>
<gene>
    <name type="primary">cry2Aa</name>
    <name type="synonym">cryB1</name>
    <name type="synonym">cryII</name>
    <name type="synonym">cryIIA(a)</name>
</gene>
<keyword id="KW-0749">Sporulation</keyword>
<keyword id="KW-0800">Toxin</keyword>
<keyword id="KW-0843">Virulence</keyword>
<reference key="1">
    <citation type="submission" date="1998-02" db="EMBL/GenBank/DDBJ databases">
        <authorList>
            <person name="Misra H.S."/>
            <person name="Khairnar N.P."/>
            <person name="Mathur M."/>
            <person name="Donnelly R.J."/>
            <person name="Mahajan S.K."/>
        </authorList>
    </citation>
    <scope>NUCLEOTIDE SEQUENCE [GENOMIC DNA]</scope>
    <source>
        <strain>4A4C / HD-549</strain>
    </source>
</reference>
<organism>
    <name type="scientific">Bacillus thuringiensis subsp. kenyae</name>
    <dbReference type="NCBI Taxonomy" id="33930"/>
    <lineage>
        <taxon>Bacteria</taxon>
        <taxon>Bacillati</taxon>
        <taxon>Bacillota</taxon>
        <taxon>Bacilli</taxon>
        <taxon>Bacillales</taxon>
        <taxon>Bacillaceae</taxon>
        <taxon>Bacillus</taxon>
        <taxon>Bacillus cereus group</taxon>
    </lineage>
</organism>
<accession>P0A378</accession>
<accession>O52764</accession>
<accession>P21253</accession>
<proteinExistence type="inferred from homology"/>
<protein>
    <recommendedName>
        <fullName>Pesticidal crystal protein Cry2Aa</fullName>
    </recommendedName>
    <alternativeName>
        <fullName>71 kDa crystal protein</fullName>
    </alternativeName>
    <alternativeName>
        <fullName>Crystaline entomocidal protoxin</fullName>
    </alternativeName>
    <alternativeName>
        <fullName>Insecticidal delta-endotoxin CryIIA(a)</fullName>
    </alternativeName>
    <alternativeName>
        <fullName>Mosquito factor</fullName>
    </alternativeName>
    <alternativeName>
        <fullName>P2 crystal protein</fullName>
    </alternativeName>
</protein>